<accession>B3ER35</accession>
<accession>C3L4F1</accession>
<feature type="chain" id="PRO_1000096474" description="Triosephosphate isomerase">
    <location>
        <begin position="1"/>
        <end position="253"/>
    </location>
</feature>
<feature type="active site" description="Electrophile" evidence="1">
    <location>
        <position position="98"/>
    </location>
</feature>
<feature type="active site" description="Proton acceptor" evidence="1">
    <location>
        <position position="170"/>
    </location>
</feature>
<feature type="binding site" evidence="1">
    <location>
        <begin position="9"/>
        <end position="11"/>
    </location>
    <ligand>
        <name>substrate</name>
    </ligand>
</feature>
<feature type="binding site" evidence="1">
    <location>
        <position position="176"/>
    </location>
    <ligand>
        <name>substrate</name>
    </ligand>
</feature>
<feature type="binding site" evidence="1">
    <location>
        <position position="216"/>
    </location>
    <ligand>
        <name>substrate</name>
    </ligand>
</feature>
<feature type="binding site" evidence="1">
    <location>
        <begin position="237"/>
        <end position="238"/>
    </location>
    <ligand>
        <name>substrate</name>
    </ligand>
</feature>
<sequence>MQRTIIAANWKMNKNFQEGLQLAKEITQFIQAEPLAGAQIILFPSFIHLEGISKLLTPEVKLHLGAQNCHDQIAGAFTGEVSAAMLASIDVRYVLVGHSERRQNFAEDNDLIAKKIDAILSCKLQPVFCCGEPLSVRESNQHYAFIEQQIAESLFHLTPDELQQVIIAYEPIWAIGTGLIPSLAEIEEMQQTIRNILKKQYNTVLADNMAILYGGSCNASNITKLISLPGINGVLIGGASLHFKEFIHILRSL</sequence>
<comment type="function">
    <text evidence="1">Involved in the gluconeogenesis. Catalyzes stereospecifically the conversion of dihydroxyacetone phosphate (DHAP) to D-glyceraldehyde-3-phosphate (G3P).</text>
</comment>
<comment type="catalytic activity">
    <reaction evidence="1">
        <text>D-glyceraldehyde 3-phosphate = dihydroxyacetone phosphate</text>
        <dbReference type="Rhea" id="RHEA:18585"/>
        <dbReference type="ChEBI" id="CHEBI:57642"/>
        <dbReference type="ChEBI" id="CHEBI:59776"/>
        <dbReference type="EC" id="5.3.1.1"/>
    </reaction>
</comment>
<comment type="pathway">
    <text evidence="1">Carbohydrate biosynthesis; gluconeogenesis.</text>
</comment>
<comment type="pathway">
    <text evidence="1">Carbohydrate degradation; glycolysis; D-glyceraldehyde 3-phosphate from glycerone phosphate: step 1/1.</text>
</comment>
<comment type="subunit">
    <text evidence="1">Homodimer.</text>
</comment>
<comment type="subcellular location">
    <subcellularLocation>
        <location evidence="1">Cytoplasm</location>
    </subcellularLocation>
</comment>
<comment type="similarity">
    <text evidence="1">Belongs to the triosephosphate isomerase family.</text>
</comment>
<comment type="sequence caution" evidence="2">
    <conflict type="erroneous initiation">
        <sequence resource="EMBL-CDS" id="ACP20869"/>
    </conflict>
</comment>
<protein>
    <recommendedName>
        <fullName evidence="1">Triosephosphate isomerase</fullName>
        <shortName evidence="1">TIM</shortName>
        <shortName evidence="1">TPI</shortName>
        <ecNumber evidence="1">5.3.1.1</ecNumber>
    </recommendedName>
    <alternativeName>
        <fullName evidence="1">Triose-phosphate isomerase</fullName>
    </alternativeName>
</protein>
<evidence type="ECO:0000255" key="1">
    <source>
        <dbReference type="HAMAP-Rule" id="MF_00147"/>
    </source>
</evidence>
<evidence type="ECO:0000305" key="2"/>
<dbReference type="EC" id="5.3.1.1" evidence="1"/>
<dbReference type="EMBL" id="CP001102">
    <property type="protein sequence ID" value="ACP20869.1"/>
    <property type="status" value="ALT_INIT"/>
    <property type="molecule type" value="Genomic_DNA"/>
</dbReference>
<dbReference type="RefSeq" id="WP_044282719.1">
    <property type="nucleotide sequence ID" value="NC_010830.1"/>
</dbReference>
<dbReference type="SMR" id="B3ER35"/>
<dbReference type="STRING" id="452471.Aasi_1507"/>
<dbReference type="KEGG" id="aas:Aasi_1507"/>
<dbReference type="eggNOG" id="COG0149">
    <property type="taxonomic scope" value="Bacteria"/>
</dbReference>
<dbReference type="HOGENOM" id="CLU_024251_2_3_10"/>
<dbReference type="OrthoDB" id="9809429at2"/>
<dbReference type="UniPathway" id="UPA00109">
    <property type="reaction ID" value="UER00189"/>
</dbReference>
<dbReference type="UniPathway" id="UPA00138"/>
<dbReference type="Proteomes" id="UP000001227">
    <property type="component" value="Chromosome"/>
</dbReference>
<dbReference type="GO" id="GO:0005829">
    <property type="term" value="C:cytosol"/>
    <property type="evidence" value="ECO:0007669"/>
    <property type="project" value="TreeGrafter"/>
</dbReference>
<dbReference type="GO" id="GO:0004807">
    <property type="term" value="F:triose-phosphate isomerase activity"/>
    <property type="evidence" value="ECO:0007669"/>
    <property type="project" value="UniProtKB-UniRule"/>
</dbReference>
<dbReference type="GO" id="GO:0006094">
    <property type="term" value="P:gluconeogenesis"/>
    <property type="evidence" value="ECO:0007669"/>
    <property type="project" value="UniProtKB-UniRule"/>
</dbReference>
<dbReference type="GO" id="GO:0046166">
    <property type="term" value="P:glyceraldehyde-3-phosphate biosynthetic process"/>
    <property type="evidence" value="ECO:0007669"/>
    <property type="project" value="TreeGrafter"/>
</dbReference>
<dbReference type="GO" id="GO:0019563">
    <property type="term" value="P:glycerol catabolic process"/>
    <property type="evidence" value="ECO:0007669"/>
    <property type="project" value="TreeGrafter"/>
</dbReference>
<dbReference type="GO" id="GO:0006096">
    <property type="term" value="P:glycolytic process"/>
    <property type="evidence" value="ECO:0007669"/>
    <property type="project" value="UniProtKB-UniRule"/>
</dbReference>
<dbReference type="CDD" id="cd00311">
    <property type="entry name" value="TIM"/>
    <property type="match status" value="1"/>
</dbReference>
<dbReference type="FunFam" id="3.20.20.70:FF:000016">
    <property type="entry name" value="Triosephosphate isomerase"/>
    <property type="match status" value="1"/>
</dbReference>
<dbReference type="Gene3D" id="3.20.20.70">
    <property type="entry name" value="Aldolase class I"/>
    <property type="match status" value="1"/>
</dbReference>
<dbReference type="HAMAP" id="MF_00147_B">
    <property type="entry name" value="TIM_B"/>
    <property type="match status" value="1"/>
</dbReference>
<dbReference type="InterPro" id="IPR013785">
    <property type="entry name" value="Aldolase_TIM"/>
</dbReference>
<dbReference type="InterPro" id="IPR035990">
    <property type="entry name" value="TIM_sf"/>
</dbReference>
<dbReference type="InterPro" id="IPR022896">
    <property type="entry name" value="TrioseP_Isoase_bac/euk"/>
</dbReference>
<dbReference type="InterPro" id="IPR000652">
    <property type="entry name" value="Triosephosphate_isomerase"/>
</dbReference>
<dbReference type="InterPro" id="IPR020861">
    <property type="entry name" value="Triosephosphate_isomerase_AS"/>
</dbReference>
<dbReference type="NCBIfam" id="TIGR00419">
    <property type="entry name" value="tim"/>
    <property type="match status" value="1"/>
</dbReference>
<dbReference type="PANTHER" id="PTHR21139">
    <property type="entry name" value="TRIOSEPHOSPHATE ISOMERASE"/>
    <property type="match status" value="1"/>
</dbReference>
<dbReference type="PANTHER" id="PTHR21139:SF42">
    <property type="entry name" value="TRIOSEPHOSPHATE ISOMERASE"/>
    <property type="match status" value="1"/>
</dbReference>
<dbReference type="Pfam" id="PF00121">
    <property type="entry name" value="TIM"/>
    <property type="match status" value="1"/>
</dbReference>
<dbReference type="SUPFAM" id="SSF51351">
    <property type="entry name" value="Triosephosphate isomerase (TIM)"/>
    <property type="match status" value="1"/>
</dbReference>
<dbReference type="PROSITE" id="PS00171">
    <property type="entry name" value="TIM_1"/>
    <property type="match status" value="1"/>
</dbReference>
<dbReference type="PROSITE" id="PS51440">
    <property type="entry name" value="TIM_2"/>
    <property type="match status" value="1"/>
</dbReference>
<gene>
    <name evidence="1" type="primary">tpiA</name>
    <name type="ordered locus">Aasi_0244</name>
    <name type="ordered locus">Aasi_1507</name>
</gene>
<organism>
    <name type="scientific">Amoebophilus asiaticus (strain 5a2)</name>
    <dbReference type="NCBI Taxonomy" id="452471"/>
    <lineage>
        <taxon>Bacteria</taxon>
        <taxon>Pseudomonadati</taxon>
        <taxon>Bacteroidota</taxon>
        <taxon>Cytophagia</taxon>
        <taxon>Cytophagales</taxon>
        <taxon>Amoebophilaceae</taxon>
        <taxon>Candidatus Amoebophilus</taxon>
    </lineage>
</organism>
<keyword id="KW-0963">Cytoplasm</keyword>
<keyword id="KW-0312">Gluconeogenesis</keyword>
<keyword id="KW-0324">Glycolysis</keyword>
<keyword id="KW-0413">Isomerase</keyword>
<keyword id="KW-1185">Reference proteome</keyword>
<name>TPIS_AMOA5</name>
<reference key="1">
    <citation type="journal article" date="2010" name="J. Bacteriol.">
        <title>The genome of the amoeba symbiont 'Candidatus Amoebophilus asiaticus' reveals common mechanisms for host cell interaction among amoeba-associated bacteria.</title>
        <authorList>
            <person name="Schmitz-Esser S."/>
            <person name="Tischler P."/>
            <person name="Arnold R."/>
            <person name="Montanaro J."/>
            <person name="Wagner M."/>
            <person name="Rattei T."/>
            <person name="Horn M."/>
        </authorList>
    </citation>
    <scope>NUCLEOTIDE SEQUENCE [LARGE SCALE GENOMIC DNA]</scope>
    <source>
        <strain>5a2</strain>
    </source>
</reference>
<proteinExistence type="inferred from homology"/>